<reference key="1">
    <citation type="submission" date="2000-07" db="EMBL/GenBank/DDBJ databases">
        <title>Nucleotide sequences of the XhoI methylase and endonuclease genes.</title>
        <authorList>
            <person name="Morita M."/>
            <person name="Sugino Y."/>
        </authorList>
    </citation>
    <scope>NUCLEOTIDE SEQUENCE [GENOMIC DNA]</scope>
    <source>
        <strain>ATCC 13461 / XH 3 / LMG 7416</strain>
    </source>
</reference>
<reference key="2">
    <citation type="journal article" date="2003" name="Nucleic Acids Res.">
        <title>A nomenclature for restriction enzymes, DNA methyltransferases, homing endonucleases and their genes.</title>
        <authorList>
            <person name="Roberts R.J."/>
            <person name="Belfort M."/>
            <person name="Bestor T."/>
            <person name="Bhagwat A.S."/>
            <person name="Bickle T.A."/>
            <person name="Bitinaite J."/>
            <person name="Blumenthal R.M."/>
            <person name="Degtyarev S.K."/>
            <person name="Dryden D.T."/>
            <person name="Dybvig K."/>
            <person name="Firman K."/>
            <person name="Gromova E.S."/>
            <person name="Gumport R.I."/>
            <person name="Halford S.E."/>
            <person name="Hattman S."/>
            <person name="Heitman J."/>
            <person name="Hornby D.P."/>
            <person name="Janulaitis A."/>
            <person name="Jeltsch A."/>
            <person name="Josephsen J."/>
            <person name="Kiss A."/>
            <person name="Klaenhammer T.R."/>
            <person name="Kobayashi I."/>
            <person name="Kong H."/>
            <person name="Krueger D.H."/>
            <person name="Lacks S."/>
            <person name="Marinus M.G."/>
            <person name="Miyahara M."/>
            <person name="Morgan R.D."/>
            <person name="Murray N.E."/>
            <person name="Nagaraja V."/>
            <person name="Piekarowicz A."/>
            <person name="Pingoud A."/>
            <person name="Raleigh E."/>
            <person name="Rao D.N."/>
            <person name="Reich N."/>
            <person name="Repin V.E."/>
            <person name="Selker E.U."/>
            <person name="Shaw P.C."/>
            <person name="Stein D.C."/>
            <person name="Stoddard B.L."/>
            <person name="Szybalski W."/>
            <person name="Trautner T.A."/>
            <person name="Van Etten J.L."/>
            <person name="Vitor J.M."/>
            <person name="Wilson G.G."/>
            <person name="Xu S.Y."/>
        </authorList>
    </citation>
    <scope>NOMENCLATURE</scope>
    <scope>SUBTYPE</scope>
</reference>
<feature type="chain" id="PRO_0000077372" description="Type II restriction enzyme XhoI">
    <location>
        <begin position="1"/>
        <end position="248"/>
    </location>
</feature>
<name>T2X1_XANVA</name>
<organism>
    <name type="scientific">Xanthomonas vasicola</name>
    <dbReference type="NCBI Taxonomy" id="56459"/>
    <lineage>
        <taxon>Bacteria</taxon>
        <taxon>Pseudomonadati</taxon>
        <taxon>Pseudomonadota</taxon>
        <taxon>Gammaproteobacteria</taxon>
        <taxon>Lysobacterales</taxon>
        <taxon>Lysobacteraceae</taxon>
        <taxon>Xanthomonas</taxon>
    </lineage>
</organism>
<proteinExistence type="inferred from homology"/>
<keyword id="KW-0255">Endonuclease</keyword>
<keyword id="KW-0378">Hydrolase</keyword>
<keyword id="KW-0540">Nuclease</keyword>
<keyword id="KW-0680">Restriction system</keyword>
<dbReference type="EC" id="3.1.21.4"/>
<dbReference type="EMBL" id="AB046567">
    <property type="protein sequence ID" value="BAB03597.1"/>
    <property type="molecule type" value="Genomic_DNA"/>
</dbReference>
<dbReference type="STRING" id="56459.NX79_21410"/>
<dbReference type="ChEMBL" id="CHEMBL2439945"/>
<dbReference type="BRENDA" id="3.1.21.4">
    <property type="organism ID" value="6712"/>
</dbReference>
<dbReference type="PRO" id="PR:Q9KVZ7"/>
<dbReference type="GO" id="GO:0003677">
    <property type="term" value="F:DNA binding"/>
    <property type="evidence" value="ECO:0007669"/>
    <property type="project" value="InterPro"/>
</dbReference>
<dbReference type="GO" id="GO:0009036">
    <property type="term" value="F:type II site-specific deoxyribonuclease activity"/>
    <property type="evidence" value="ECO:0007669"/>
    <property type="project" value="UniProtKB-EC"/>
</dbReference>
<dbReference type="GO" id="GO:0009307">
    <property type="term" value="P:DNA restriction-modification system"/>
    <property type="evidence" value="ECO:0007669"/>
    <property type="project" value="UniProtKB-KW"/>
</dbReference>
<dbReference type="InterPro" id="IPR007636">
    <property type="entry name" value="Restrct_endonuc_II_XhoI"/>
</dbReference>
<dbReference type="Pfam" id="PF04555">
    <property type="entry name" value="XhoI"/>
    <property type="match status" value="1"/>
</dbReference>
<dbReference type="PIRSF" id="PIRSF000994">
    <property type="entry name" value="Restrict_endonuc_II_XhoI"/>
    <property type="match status" value="1"/>
</dbReference>
<accession>Q9KVZ7</accession>
<protein>
    <recommendedName>
        <fullName evidence="1">Type II restriction enzyme XhoI</fullName>
        <shortName>R.XhoI</shortName>
        <ecNumber>3.1.21.4</ecNumber>
    </recommendedName>
    <alternativeName>
        <fullName>Endonuclease XhoI</fullName>
    </alternativeName>
    <alternativeName>
        <fullName>Type-2 restriction enzyme XhoI</fullName>
    </alternativeName>
</protein>
<comment type="function">
    <text evidence="1">A P subtype restriction enzyme that recognizes the double-stranded sequence 5'-CTCGAG-3' and cleaves after C-1.</text>
</comment>
<comment type="catalytic activity">
    <reaction>
        <text>Endonucleolytic cleavage of DNA to give specific double-stranded fragments with terminal 5'-phosphates.</text>
        <dbReference type="EC" id="3.1.21.4"/>
    </reaction>
</comment>
<comment type="similarity">
    <text evidence="2">Belongs to the XhoI type II restriction endonuclease family.</text>
</comment>
<evidence type="ECO:0000303" key="1">
    <source>
    </source>
</evidence>
<evidence type="ECO:0000305" key="2"/>
<sequence>MALDLAEYDRLARLGVAQFWDGRSSALENDEERSQGGERSGVLGGRNMDGFLAMIEGIVRKNGLPDAEVCIKGRPNLTLPGYYRPTKLWDVLVFDGKKLVAAVELKSHVGPSFGNNFNNRAEEAIGTAHDLATAIREGILGDQLPPFTGWLILVEDCEKSKRAVRDSSPHFPVFPDFKGASYLTRYEVLCRKLILKGFTPRPQSLLRPALRVLGATIASFRKPRVCAHLRHGWPAMYPVGQSRIRVNF</sequence>